<name>VPC12_MYCTO</name>
<keyword id="KW-0378">Hydrolase</keyword>
<keyword id="KW-0460">Magnesium</keyword>
<keyword id="KW-0479">Metal-binding</keyword>
<keyword id="KW-0540">Nuclease</keyword>
<keyword id="KW-1185">Reference proteome</keyword>
<keyword id="KW-1277">Toxin-antitoxin system</keyword>
<dbReference type="EC" id="3.1.-.-" evidence="1"/>
<dbReference type="EMBL" id="AE000516">
    <property type="protein sequence ID" value="AAK46033.1"/>
    <property type="molecule type" value="Genomic_DNA"/>
</dbReference>
<dbReference type="PIR" id="C70686">
    <property type="entry name" value="C70686"/>
</dbReference>
<dbReference type="RefSeq" id="WP_003408465.1">
    <property type="nucleotide sequence ID" value="NZ_KK341227.1"/>
</dbReference>
<dbReference type="SMR" id="P9WFA2"/>
<dbReference type="KEGG" id="mtc:MT1761"/>
<dbReference type="PATRIC" id="fig|83331.31.peg.1890"/>
<dbReference type="HOGENOM" id="CLU_121774_0_0_11"/>
<dbReference type="Proteomes" id="UP000001020">
    <property type="component" value="Chromosome"/>
</dbReference>
<dbReference type="GO" id="GO:0000287">
    <property type="term" value="F:magnesium ion binding"/>
    <property type="evidence" value="ECO:0007669"/>
    <property type="project" value="UniProtKB-UniRule"/>
</dbReference>
<dbReference type="GO" id="GO:0004540">
    <property type="term" value="F:RNA nuclease activity"/>
    <property type="evidence" value="ECO:0007669"/>
    <property type="project" value="InterPro"/>
</dbReference>
<dbReference type="CDD" id="cd09873">
    <property type="entry name" value="PIN_Pae0151-like"/>
    <property type="match status" value="1"/>
</dbReference>
<dbReference type="Gene3D" id="3.40.50.1010">
    <property type="entry name" value="5'-nuclease"/>
    <property type="match status" value="1"/>
</dbReference>
<dbReference type="HAMAP" id="MF_00265">
    <property type="entry name" value="VapC_Nob1"/>
    <property type="match status" value="1"/>
</dbReference>
<dbReference type="InterPro" id="IPR029060">
    <property type="entry name" value="PIN-like_dom_sf"/>
</dbReference>
<dbReference type="InterPro" id="IPR002716">
    <property type="entry name" value="PIN_dom"/>
</dbReference>
<dbReference type="InterPro" id="IPR044153">
    <property type="entry name" value="PIN_Pae0151-like"/>
</dbReference>
<dbReference type="InterPro" id="IPR051619">
    <property type="entry name" value="TypeII_TA_RNase_PINc/VapC"/>
</dbReference>
<dbReference type="InterPro" id="IPR022907">
    <property type="entry name" value="VapC_family"/>
</dbReference>
<dbReference type="PANTHER" id="PTHR35901:SF1">
    <property type="entry name" value="EXONUCLEASE VAPC9"/>
    <property type="match status" value="1"/>
</dbReference>
<dbReference type="PANTHER" id="PTHR35901">
    <property type="entry name" value="RIBONUCLEASE VAPC3"/>
    <property type="match status" value="1"/>
</dbReference>
<dbReference type="Pfam" id="PF01850">
    <property type="entry name" value="PIN"/>
    <property type="match status" value="1"/>
</dbReference>
<dbReference type="SUPFAM" id="SSF88723">
    <property type="entry name" value="PIN domain-like"/>
    <property type="match status" value="1"/>
</dbReference>
<gene>
    <name evidence="1" type="primary">vapC12</name>
    <name type="ordered locus">MT1761</name>
</gene>
<comment type="function">
    <text evidence="1">Toxic component of a type II toxin-antitoxin (TA) system. An RNase. The cognate antitoxin is VapB12 (By similarity).</text>
</comment>
<comment type="cofactor">
    <cofactor evidence="1">
        <name>Mg(2+)</name>
        <dbReference type="ChEBI" id="CHEBI:18420"/>
    </cofactor>
</comment>
<comment type="similarity">
    <text evidence="1">Belongs to the PINc/VapC protein family.</text>
</comment>
<protein>
    <recommendedName>
        <fullName evidence="1">Ribonuclease VapC12</fullName>
        <shortName evidence="1">RNase VapC12</shortName>
        <ecNumber evidence="1">3.1.-.-</ecNumber>
    </recommendedName>
    <alternativeName>
        <fullName evidence="1">Toxin VapC12</fullName>
    </alternativeName>
</protein>
<feature type="chain" id="PRO_0000428574" description="Ribonuclease VapC12">
    <location>
        <begin position="1"/>
        <end position="129"/>
    </location>
</feature>
<feature type="binding site" evidence="1">
    <location>
        <position position="5"/>
    </location>
    <ligand>
        <name>Mg(2+)</name>
        <dbReference type="ChEBI" id="CHEBI:18420"/>
    </ligand>
</feature>
<feature type="binding site" evidence="1">
    <location>
        <position position="94"/>
    </location>
    <ligand>
        <name>Mg(2+)</name>
        <dbReference type="ChEBI" id="CHEBI:18420"/>
    </ligand>
</feature>
<reference key="1">
    <citation type="journal article" date="2002" name="J. Bacteriol.">
        <title>Whole-genome comparison of Mycobacterium tuberculosis clinical and laboratory strains.</title>
        <authorList>
            <person name="Fleischmann R.D."/>
            <person name="Alland D."/>
            <person name="Eisen J.A."/>
            <person name="Carpenter L."/>
            <person name="White O."/>
            <person name="Peterson J.D."/>
            <person name="DeBoy R.T."/>
            <person name="Dodson R.J."/>
            <person name="Gwinn M.L."/>
            <person name="Haft D.H."/>
            <person name="Hickey E.K."/>
            <person name="Kolonay J.F."/>
            <person name="Nelson W.C."/>
            <person name="Umayam L.A."/>
            <person name="Ermolaeva M.D."/>
            <person name="Salzberg S.L."/>
            <person name="Delcher A."/>
            <person name="Utterback T.R."/>
            <person name="Weidman J.F."/>
            <person name="Khouri H.M."/>
            <person name="Gill J."/>
            <person name="Mikula A."/>
            <person name="Bishai W."/>
            <person name="Jacobs W.R. Jr."/>
            <person name="Venter J.C."/>
            <person name="Fraser C.M."/>
        </authorList>
    </citation>
    <scope>NUCLEOTIDE SEQUENCE [LARGE SCALE GENOMIC DNA]</scope>
    <source>
        <strain>CDC 1551 / Oshkosh</strain>
    </source>
</reference>
<accession>P9WFA2</accession>
<accession>L0T7H4</accession>
<accession>P71978</accession>
<accession>Q7D832</accession>
<organism>
    <name type="scientific">Mycobacterium tuberculosis (strain CDC 1551 / Oshkosh)</name>
    <dbReference type="NCBI Taxonomy" id="83331"/>
    <lineage>
        <taxon>Bacteria</taxon>
        <taxon>Bacillati</taxon>
        <taxon>Actinomycetota</taxon>
        <taxon>Actinomycetes</taxon>
        <taxon>Mycobacteriales</taxon>
        <taxon>Mycobacteriaceae</taxon>
        <taxon>Mycobacterium</taxon>
        <taxon>Mycobacterium tuberculosis complex</taxon>
    </lineage>
</organism>
<evidence type="ECO:0000255" key="1">
    <source>
        <dbReference type="HAMAP-Rule" id="MF_00265"/>
    </source>
</evidence>
<sequence>MIVLDASAAVELMLTTPAGAAVARRLRGETVHAPAHFDVEVIGAIRQAVVRQLISDHEGLVVVVNFLSLPVRRWPLKPFTQRAYQLRSTHTVADGAYVALAEGLGVPLITCDGRLAQSHGHNAEIELVA</sequence>
<proteinExistence type="inferred from homology"/>